<proteinExistence type="inferred from homology"/>
<protein>
    <recommendedName>
        <fullName>ATP-dependent RNA helicase DBP2</fullName>
        <ecNumber>3.6.4.13</ecNumber>
    </recommendedName>
</protein>
<comment type="function">
    <text evidence="1">ATP-dependent RNA helicase involved nonsense-mediated mRNA decay and ribosome biogenesis through rRNA processing.</text>
</comment>
<comment type="catalytic activity">
    <reaction>
        <text>ATP + H2O = ADP + phosphate + H(+)</text>
        <dbReference type="Rhea" id="RHEA:13065"/>
        <dbReference type="ChEBI" id="CHEBI:15377"/>
        <dbReference type="ChEBI" id="CHEBI:15378"/>
        <dbReference type="ChEBI" id="CHEBI:30616"/>
        <dbReference type="ChEBI" id="CHEBI:43474"/>
        <dbReference type="ChEBI" id="CHEBI:456216"/>
        <dbReference type="EC" id="3.6.4.13"/>
    </reaction>
</comment>
<comment type="subunit">
    <text evidence="1">Associates with polysomes.</text>
</comment>
<comment type="subcellular location">
    <subcellularLocation>
        <location evidence="1">Cytoplasm</location>
    </subcellularLocation>
    <subcellularLocation>
        <location evidence="1">Nucleus</location>
    </subcellularLocation>
</comment>
<comment type="domain">
    <text>The Q motif is unique to and characteristic of the DEAD box family of RNA helicases and controls ATP binding and hydrolysis.</text>
</comment>
<comment type="similarity">
    <text evidence="5">Belongs to the DEAD box helicase family. DDX5/DBP2 subfamily.</text>
</comment>
<feature type="chain" id="PRO_0000227944" description="ATP-dependent RNA helicase DBP2">
    <location>
        <begin position="1"/>
        <end position="557"/>
    </location>
</feature>
<feature type="domain" description="Helicase ATP-binding" evidence="2">
    <location>
        <begin position="145"/>
        <end position="320"/>
    </location>
</feature>
<feature type="domain" description="Helicase C-terminal" evidence="3">
    <location>
        <begin position="348"/>
        <end position="495"/>
    </location>
</feature>
<feature type="region of interest" description="Disordered" evidence="4">
    <location>
        <begin position="1"/>
        <end position="58"/>
    </location>
</feature>
<feature type="region of interest" description="RNA-binding RGG-box" evidence="1">
    <location>
        <begin position="506"/>
        <end position="532"/>
    </location>
</feature>
<feature type="short sequence motif" description="Q motif">
    <location>
        <begin position="114"/>
        <end position="142"/>
    </location>
</feature>
<feature type="short sequence motif" description="DEAD box">
    <location>
        <begin position="268"/>
        <end position="271"/>
    </location>
</feature>
<feature type="compositionally biased region" description="Basic and acidic residues" evidence="4">
    <location>
        <begin position="19"/>
        <end position="34"/>
    </location>
</feature>
<feature type="compositionally biased region" description="Gly residues" evidence="4">
    <location>
        <begin position="40"/>
        <end position="50"/>
    </location>
</feature>
<feature type="binding site" evidence="2">
    <location>
        <begin position="158"/>
        <end position="165"/>
    </location>
    <ligand>
        <name>ATP</name>
        <dbReference type="ChEBI" id="CHEBI:30616"/>
    </ligand>
</feature>
<reference key="1">
    <citation type="journal article" date="2004" name="Science">
        <title>The Ashbya gossypii genome as a tool for mapping the ancient Saccharomyces cerevisiae genome.</title>
        <authorList>
            <person name="Dietrich F.S."/>
            <person name="Voegeli S."/>
            <person name="Brachat S."/>
            <person name="Lerch A."/>
            <person name="Gates K."/>
            <person name="Steiner S."/>
            <person name="Mohr C."/>
            <person name="Poehlmann R."/>
            <person name="Luedi P."/>
            <person name="Choi S."/>
            <person name="Wing R.A."/>
            <person name="Flavier A."/>
            <person name="Gaffney T.D."/>
            <person name="Philippsen P."/>
        </authorList>
    </citation>
    <scope>NUCLEOTIDE SEQUENCE [LARGE SCALE GENOMIC DNA]</scope>
    <source>
        <strain>ATCC 10895 / CBS 109.51 / FGSC 9923 / NRRL Y-1056</strain>
    </source>
</reference>
<reference key="2">
    <citation type="journal article" date="2013" name="G3 (Bethesda)">
        <title>Genomes of Ashbya fungi isolated from insects reveal four mating-type loci, numerous translocations, lack of transposons, and distinct gene duplications.</title>
        <authorList>
            <person name="Dietrich F.S."/>
            <person name="Voegeli S."/>
            <person name="Kuo S."/>
            <person name="Philippsen P."/>
        </authorList>
    </citation>
    <scope>GENOME REANNOTATION</scope>
    <scope>SEQUENCE REVISION TO 337; 356; 367-368; 394-407 AND 421</scope>
    <source>
        <strain>ATCC 10895 / CBS 109.51 / FGSC 9923 / NRRL Y-1056</strain>
    </source>
</reference>
<dbReference type="EC" id="3.6.4.13"/>
<dbReference type="EMBL" id="AE016819">
    <property type="protein sequence ID" value="AAS53153.2"/>
    <property type="molecule type" value="Genomic_DNA"/>
</dbReference>
<dbReference type="RefSeq" id="NP_985329.2">
    <property type="nucleotide sequence ID" value="NM_210683.2"/>
</dbReference>
<dbReference type="SMR" id="Q755N4"/>
<dbReference type="FunCoup" id="Q755N4">
    <property type="interactions" value="1291"/>
</dbReference>
<dbReference type="STRING" id="284811.Q755N4"/>
<dbReference type="EnsemblFungi" id="AAS53153">
    <property type="protein sequence ID" value="AAS53153"/>
    <property type="gene ID" value="AGOS_AFL221C"/>
</dbReference>
<dbReference type="GeneID" id="4621553"/>
<dbReference type="KEGG" id="ago:AGOS_AFL221C"/>
<dbReference type="eggNOG" id="KOG0331">
    <property type="taxonomic scope" value="Eukaryota"/>
</dbReference>
<dbReference type="HOGENOM" id="CLU_003041_16_9_1"/>
<dbReference type="InParanoid" id="Q755N4"/>
<dbReference type="OMA" id="STMPKFE"/>
<dbReference type="OrthoDB" id="196131at2759"/>
<dbReference type="Proteomes" id="UP000000591">
    <property type="component" value="Chromosome VI"/>
</dbReference>
<dbReference type="GO" id="GO:0005737">
    <property type="term" value="C:cytoplasm"/>
    <property type="evidence" value="ECO:0000318"/>
    <property type="project" value="GO_Central"/>
</dbReference>
<dbReference type="GO" id="GO:0005634">
    <property type="term" value="C:nucleus"/>
    <property type="evidence" value="ECO:0000318"/>
    <property type="project" value="GO_Central"/>
</dbReference>
<dbReference type="GO" id="GO:1990904">
    <property type="term" value="C:ribonucleoprotein complex"/>
    <property type="evidence" value="ECO:0000318"/>
    <property type="project" value="GO_Central"/>
</dbReference>
<dbReference type="GO" id="GO:0005524">
    <property type="term" value="F:ATP binding"/>
    <property type="evidence" value="ECO:0007669"/>
    <property type="project" value="UniProtKB-KW"/>
</dbReference>
<dbReference type="GO" id="GO:0016887">
    <property type="term" value="F:ATP hydrolysis activity"/>
    <property type="evidence" value="ECO:0007669"/>
    <property type="project" value="RHEA"/>
</dbReference>
<dbReference type="GO" id="GO:0051880">
    <property type="term" value="F:G-quadruplex DNA binding"/>
    <property type="evidence" value="ECO:0007669"/>
    <property type="project" value="EnsemblFungi"/>
</dbReference>
<dbReference type="GO" id="GO:0002151">
    <property type="term" value="F:G-quadruplex RNA binding"/>
    <property type="evidence" value="ECO:0007669"/>
    <property type="project" value="EnsemblFungi"/>
</dbReference>
<dbReference type="GO" id="GO:0003729">
    <property type="term" value="F:mRNA binding"/>
    <property type="evidence" value="ECO:0000318"/>
    <property type="project" value="GO_Central"/>
</dbReference>
<dbReference type="GO" id="GO:0003724">
    <property type="term" value="F:RNA helicase activity"/>
    <property type="evidence" value="ECO:0000318"/>
    <property type="project" value="GO_Central"/>
</dbReference>
<dbReference type="GO" id="GO:0030515">
    <property type="term" value="F:snoRNA binding"/>
    <property type="evidence" value="ECO:0007669"/>
    <property type="project" value="EnsemblFungi"/>
</dbReference>
<dbReference type="GO" id="GO:0000380">
    <property type="term" value="P:alternative mRNA splicing, via spliceosome"/>
    <property type="evidence" value="ECO:0000318"/>
    <property type="project" value="GO_Central"/>
</dbReference>
<dbReference type="GO" id="GO:0071042">
    <property type="term" value="P:nuclear polyadenylation-dependent mRNA catabolic process"/>
    <property type="evidence" value="ECO:0007669"/>
    <property type="project" value="EnsemblFungi"/>
</dbReference>
<dbReference type="GO" id="GO:0000184">
    <property type="term" value="P:nuclear-transcribed mRNA catabolic process, nonsense-mediated decay"/>
    <property type="evidence" value="ECO:0007669"/>
    <property type="project" value="UniProtKB-KW"/>
</dbReference>
<dbReference type="GO" id="GO:0006364">
    <property type="term" value="P:rRNA processing"/>
    <property type="evidence" value="ECO:0000318"/>
    <property type="project" value="GO_Central"/>
</dbReference>
<dbReference type="GO" id="GO:0006369">
    <property type="term" value="P:termination of RNA polymerase II transcription"/>
    <property type="evidence" value="ECO:0007669"/>
    <property type="project" value="EnsemblFungi"/>
</dbReference>
<dbReference type="CDD" id="cd17966">
    <property type="entry name" value="DEADc_DDX5_DDX17"/>
    <property type="match status" value="1"/>
</dbReference>
<dbReference type="CDD" id="cd18787">
    <property type="entry name" value="SF2_C_DEAD"/>
    <property type="match status" value="1"/>
</dbReference>
<dbReference type="FunFam" id="3.40.50.300:FF:000008">
    <property type="entry name" value="ATP-dependent RNA helicase RhlB"/>
    <property type="match status" value="1"/>
</dbReference>
<dbReference type="FunFam" id="3.40.50.300:FF:000079">
    <property type="entry name" value="probable ATP-dependent RNA helicase DDX17"/>
    <property type="match status" value="1"/>
</dbReference>
<dbReference type="Gene3D" id="3.40.50.300">
    <property type="entry name" value="P-loop containing nucleotide triphosphate hydrolases"/>
    <property type="match status" value="2"/>
</dbReference>
<dbReference type="InterPro" id="IPR011545">
    <property type="entry name" value="DEAD/DEAH_box_helicase_dom"/>
</dbReference>
<dbReference type="InterPro" id="IPR014001">
    <property type="entry name" value="Helicase_ATP-bd"/>
</dbReference>
<dbReference type="InterPro" id="IPR001650">
    <property type="entry name" value="Helicase_C-like"/>
</dbReference>
<dbReference type="InterPro" id="IPR027417">
    <property type="entry name" value="P-loop_NTPase"/>
</dbReference>
<dbReference type="InterPro" id="IPR000629">
    <property type="entry name" value="RNA-helicase_DEAD-box_CS"/>
</dbReference>
<dbReference type="InterPro" id="IPR014014">
    <property type="entry name" value="RNA_helicase_DEAD_Q_motif"/>
</dbReference>
<dbReference type="PANTHER" id="PTHR47958">
    <property type="entry name" value="ATP-DEPENDENT RNA HELICASE DBP3"/>
    <property type="match status" value="1"/>
</dbReference>
<dbReference type="Pfam" id="PF00270">
    <property type="entry name" value="DEAD"/>
    <property type="match status" value="1"/>
</dbReference>
<dbReference type="Pfam" id="PF00271">
    <property type="entry name" value="Helicase_C"/>
    <property type="match status" value="1"/>
</dbReference>
<dbReference type="SMART" id="SM00487">
    <property type="entry name" value="DEXDc"/>
    <property type="match status" value="1"/>
</dbReference>
<dbReference type="SMART" id="SM00490">
    <property type="entry name" value="HELICc"/>
    <property type="match status" value="1"/>
</dbReference>
<dbReference type="SUPFAM" id="SSF52540">
    <property type="entry name" value="P-loop containing nucleoside triphosphate hydrolases"/>
    <property type="match status" value="1"/>
</dbReference>
<dbReference type="PROSITE" id="PS00039">
    <property type="entry name" value="DEAD_ATP_HELICASE"/>
    <property type="match status" value="1"/>
</dbReference>
<dbReference type="PROSITE" id="PS51192">
    <property type="entry name" value="HELICASE_ATP_BIND_1"/>
    <property type="match status" value="1"/>
</dbReference>
<dbReference type="PROSITE" id="PS51194">
    <property type="entry name" value="HELICASE_CTER"/>
    <property type="match status" value="1"/>
</dbReference>
<dbReference type="PROSITE" id="PS51195">
    <property type="entry name" value="Q_MOTIF"/>
    <property type="match status" value="1"/>
</dbReference>
<evidence type="ECO:0000250" key="1"/>
<evidence type="ECO:0000255" key="2">
    <source>
        <dbReference type="PROSITE-ProRule" id="PRU00541"/>
    </source>
</evidence>
<evidence type="ECO:0000255" key="3">
    <source>
        <dbReference type="PROSITE-ProRule" id="PRU00542"/>
    </source>
</evidence>
<evidence type="ECO:0000256" key="4">
    <source>
        <dbReference type="SAM" id="MobiDB-lite"/>
    </source>
</evidence>
<evidence type="ECO:0000305" key="5"/>
<organism>
    <name type="scientific">Eremothecium gossypii (strain ATCC 10895 / CBS 109.51 / FGSC 9923 / NRRL Y-1056)</name>
    <name type="common">Yeast</name>
    <name type="synonym">Ashbya gossypii</name>
    <dbReference type="NCBI Taxonomy" id="284811"/>
    <lineage>
        <taxon>Eukaryota</taxon>
        <taxon>Fungi</taxon>
        <taxon>Dikarya</taxon>
        <taxon>Ascomycota</taxon>
        <taxon>Saccharomycotina</taxon>
        <taxon>Saccharomycetes</taxon>
        <taxon>Saccharomycetales</taxon>
        <taxon>Saccharomycetaceae</taxon>
        <taxon>Eremothecium</taxon>
    </lineage>
</organism>
<name>DBP2_EREGS</name>
<accession>Q755N4</accession>
<sequence length="557" mass="61728">MSYAGNRDQQFNRSNFGGRDGDHRGQRPSDRNSYGRDGFGRGGRGGFAGRGRGRSDDRLELTKPDWDVESLPKFEKNFYVEHEDVQKMSTDEVEQFRKENEMKIVGHDVPKPIRTFDEAGFPEYVLKEVKEEGFEKPTAIQCQGWPMALSGRDMIGVAATGSGKTLSYCLPGIVHINAQPLLSPGDGPVVLVLAPTRELAVQIQKECSKFGRSSRIRNTCVYGGVPKSQQIRDLQRGVEILIATPGRLIDMLEIGKTNLKRVTYLVLDEADRMLDMGFEPQIRKIVDQIRPDRQTLMWSATWPKEVQQLARDYLHDPIQVNIGSLELAASHTITQLVEVVSDFDKRDRLVKHLEIASKDKDSKIIIFASTKRTCDEITSYLRQDGWPALAIHGDKQQQERDWVLNEFRTGRSPIMVATDVAARGIDVKGINFVINYDMPGNIEDYVHRIGRTGRAGATGTAISFFTEANKTLGAQLISIMREAKQEIPQDLLVYDRAPRGGFHPRYGGRGGRGGRGGRGGRGYGGYGGGYGGYGGGYGGGHGGYGGKPKDSGWGNRN</sequence>
<gene>
    <name type="primary">DBP2</name>
    <name type="ordered locus">AFL221C</name>
</gene>
<keyword id="KW-0067">ATP-binding</keyword>
<keyword id="KW-0963">Cytoplasm</keyword>
<keyword id="KW-0347">Helicase</keyword>
<keyword id="KW-0378">Hydrolase</keyword>
<keyword id="KW-0866">Nonsense-mediated mRNA decay</keyword>
<keyword id="KW-0547">Nucleotide-binding</keyword>
<keyword id="KW-0539">Nucleus</keyword>
<keyword id="KW-1185">Reference proteome</keyword>
<keyword id="KW-0690">Ribosome biogenesis</keyword>
<keyword id="KW-0694">RNA-binding</keyword>
<keyword id="KW-0698">rRNA processing</keyword>